<comment type="function">
    <text evidence="1">May participate in the nuclear signaling of EGFR and MAPK1/ERK2.</text>
</comment>
<comment type="subcellular location">
    <subcellularLocation>
        <location evidence="1">Cell membrane</location>
        <topology evidence="1">Single-pass type I membrane protein</topology>
    </subcellularLocation>
    <subcellularLocation>
        <location evidence="1">Nucleus</location>
    </subcellularLocation>
    <subcellularLocation>
        <location evidence="1">Cytoplasm</location>
    </subcellularLocation>
    <text evidence="1">Mainly localized in the nucleus.</text>
</comment>
<comment type="alternative products">
    <event type="alternative splicing"/>
    <isoform>
        <id>Q9D3X9-1</id>
        <name>1</name>
        <sequence type="displayed"/>
    </isoform>
    <isoform>
        <id>Q9D3X9-2</id>
        <name>2</name>
        <sequence type="described" ref="VSP_014096"/>
    </isoform>
</comment>
<comment type="caution">
    <text evidence="1">A protein kinase activity has been reported however PROSITE, Pfam do not detect a protein kinase domain. Its enzyme activity is therefore unsure.</text>
</comment>
<accession>Q9D3X9</accession>
<accession>Q80TV6</accession>
<accession>Q8BJA9</accession>
<sequence>MGLQKSHLTVCLPPSVPFLILVSTLATAKSVTNSTLNGTDVVLGSVPVIIARTDHIIVKEGSSALINCSAYGFPDLEFKWYNSVGKLLKEMDDEKEKGGGKWQMLDGGLLNITKVSFSDRGKYTCVASNIYGTINNTVTLRVIFTSGDMGVYYMVVCLVAFTIVMILNITRLCMMSSHLKKTEKAINEFFRTEGAEKLQKAFEIAKRIPIITSAKTLELAKVTQFKTMEFARYIEELARSVPLPPLIMNCRTIMEEIMEVVGLEEQGQNFVRHTPEGQEAPDRDEVYTIPNSLKRSESPTADSDASSLHEQPQQIAIKVSVHPQSKRDHVDDQEGGHFEVKDEEETEPSEEHSPETAEPSTDITTTELTSEETSPVEAPERGLPPAHLETTEPAVTCDRNTCIIYESHV</sequence>
<proteinExistence type="evidence at protein level"/>
<gene>
    <name type="primary">Mfap3l</name>
    <name type="synonym">Kiaa0626</name>
</gene>
<protein>
    <recommendedName>
        <fullName>Microfibrillar-associated protein 3-like</fullName>
    </recommendedName>
</protein>
<keyword id="KW-0025">Alternative splicing</keyword>
<keyword id="KW-1003">Cell membrane</keyword>
<keyword id="KW-0963">Cytoplasm</keyword>
<keyword id="KW-1015">Disulfide bond</keyword>
<keyword id="KW-0325">Glycoprotein</keyword>
<keyword id="KW-0393">Immunoglobulin domain</keyword>
<keyword id="KW-0472">Membrane</keyword>
<keyword id="KW-0539">Nucleus</keyword>
<keyword id="KW-0597">Phosphoprotein</keyword>
<keyword id="KW-1185">Reference proteome</keyword>
<keyword id="KW-0732">Signal</keyword>
<keyword id="KW-0812">Transmembrane</keyword>
<keyword id="KW-1133">Transmembrane helix</keyword>
<evidence type="ECO:0000250" key="1">
    <source>
        <dbReference type="UniProtKB" id="O75121"/>
    </source>
</evidence>
<evidence type="ECO:0000250" key="2">
    <source>
        <dbReference type="UniProtKB" id="Q6AYP2"/>
    </source>
</evidence>
<evidence type="ECO:0000255" key="3"/>
<evidence type="ECO:0000255" key="4">
    <source>
        <dbReference type="PROSITE-ProRule" id="PRU00114"/>
    </source>
</evidence>
<evidence type="ECO:0000256" key="5">
    <source>
        <dbReference type="SAM" id="MobiDB-lite"/>
    </source>
</evidence>
<evidence type="ECO:0000303" key="6">
    <source>
    </source>
</evidence>
<evidence type="ECO:0000305" key="7"/>
<evidence type="ECO:0007744" key="8">
    <source>
    </source>
</evidence>
<name>MFA3L_MOUSE</name>
<reference key="1">
    <citation type="journal article" date="2005" name="Science">
        <title>The transcriptional landscape of the mammalian genome.</title>
        <authorList>
            <person name="Carninci P."/>
            <person name="Kasukawa T."/>
            <person name="Katayama S."/>
            <person name="Gough J."/>
            <person name="Frith M.C."/>
            <person name="Maeda N."/>
            <person name="Oyama R."/>
            <person name="Ravasi T."/>
            <person name="Lenhard B."/>
            <person name="Wells C."/>
            <person name="Kodzius R."/>
            <person name="Shimokawa K."/>
            <person name="Bajic V.B."/>
            <person name="Brenner S.E."/>
            <person name="Batalov S."/>
            <person name="Forrest A.R."/>
            <person name="Zavolan M."/>
            <person name="Davis M.J."/>
            <person name="Wilming L.G."/>
            <person name="Aidinis V."/>
            <person name="Allen J.E."/>
            <person name="Ambesi-Impiombato A."/>
            <person name="Apweiler R."/>
            <person name="Aturaliya R.N."/>
            <person name="Bailey T.L."/>
            <person name="Bansal M."/>
            <person name="Baxter L."/>
            <person name="Beisel K.W."/>
            <person name="Bersano T."/>
            <person name="Bono H."/>
            <person name="Chalk A.M."/>
            <person name="Chiu K.P."/>
            <person name="Choudhary V."/>
            <person name="Christoffels A."/>
            <person name="Clutterbuck D.R."/>
            <person name="Crowe M.L."/>
            <person name="Dalla E."/>
            <person name="Dalrymple B.P."/>
            <person name="de Bono B."/>
            <person name="Della Gatta G."/>
            <person name="di Bernardo D."/>
            <person name="Down T."/>
            <person name="Engstrom P."/>
            <person name="Fagiolini M."/>
            <person name="Faulkner G."/>
            <person name="Fletcher C.F."/>
            <person name="Fukushima T."/>
            <person name="Furuno M."/>
            <person name="Futaki S."/>
            <person name="Gariboldi M."/>
            <person name="Georgii-Hemming P."/>
            <person name="Gingeras T.R."/>
            <person name="Gojobori T."/>
            <person name="Green R.E."/>
            <person name="Gustincich S."/>
            <person name="Harbers M."/>
            <person name="Hayashi Y."/>
            <person name="Hensch T.K."/>
            <person name="Hirokawa N."/>
            <person name="Hill D."/>
            <person name="Huminiecki L."/>
            <person name="Iacono M."/>
            <person name="Ikeo K."/>
            <person name="Iwama A."/>
            <person name="Ishikawa T."/>
            <person name="Jakt M."/>
            <person name="Kanapin A."/>
            <person name="Katoh M."/>
            <person name="Kawasawa Y."/>
            <person name="Kelso J."/>
            <person name="Kitamura H."/>
            <person name="Kitano H."/>
            <person name="Kollias G."/>
            <person name="Krishnan S.P."/>
            <person name="Kruger A."/>
            <person name="Kummerfeld S.K."/>
            <person name="Kurochkin I.V."/>
            <person name="Lareau L.F."/>
            <person name="Lazarevic D."/>
            <person name="Lipovich L."/>
            <person name="Liu J."/>
            <person name="Liuni S."/>
            <person name="McWilliam S."/>
            <person name="Madan Babu M."/>
            <person name="Madera M."/>
            <person name="Marchionni L."/>
            <person name="Matsuda H."/>
            <person name="Matsuzawa S."/>
            <person name="Miki H."/>
            <person name="Mignone F."/>
            <person name="Miyake S."/>
            <person name="Morris K."/>
            <person name="Mottagui-Tabar S."/>
            <person name="Mulder N."/>
            <person name="Nakano N."/>
            <person name="Nakauchi H."/>
            <person name="Ng P."/>
            <person name="Nilsson R."/>
            <person name="Nishiguchi S."/>
            <person name="Nishikawa S."/>
            <person name="Nori F."/>
            <person name="Ohara O."/>
            <person name="Okazaki Y."/>
            <person name="Orlando V."/>
            <person name="Pang K.C."/>
            <person name="Pavan W.J."/>
            <person name="Pavesi G."/>
            <person name="Pesole G."/>
            <person name="Petrovsky N."/>
            <person name="Piazza S."/>
            <person name="Reed J."/>
            <person name="Reid J.F."/>
            <person name="Ring B.Z."/>
            <person name="Ringwald M."/>
            <person name="Rost B."/>
            <person name="Ruan Y."/>
            <person name="Salzberg S.L."/>
            <person name="Sandelin A."/>
            <person name="Schneider C."/>
            <person name="Schoenbach C."/>
            <person name="Sekiguchi K."/>
            <person name="Semple C.A."/>
            <person name="Seno S."/>
            <person name="Sessa L."/>
            <person name="Sheng Y."/>
            <person name="Shibata Y."/>
            <person name="Shimada H."/>
            <person name="Shimada K."/>
            <person name="Silva D."/>
            <person name="Sinclair B."/>
            <person name="Sperling S."/>
            <person name="Stupka E."/>
            <person name="Sugiura K."/>
            <person name="Sultana R."/>
            <person name="Takenaka Y."/>
            <person name="Taki K."/>
            <person name="Tammoja K."/>
            <person name="Tan S.L."/>
            <person name="Tang S."/>
            <person name="Taylor M.S."/>
            <person name="Tegner J."/>
            <person name="Teichmann S.A."/>
            <person name="Ueda H.R."/>
            <person name="van Nimwegen E."/>
            <person name="Verardo R."/>
            <person name="Wei C.L."/>
            <person name="Yagi K."/>
            <person name="Yamanishi H."/>
            <person name="Zabarovsky E."/>
            <person name="Zhu S."/>
            <person name="Zimmer A."/>
            <person name="Hide W."/>
            <person name="Bult C."/>
            <person name="Grimmond S.M."/>
            <person name="Teasdale R.D."/>
            <person name="Liu E.T."/>
            <person name="Brusic V."/>
            <person name="Quackenbush J."/>
            <person name="Wahlestedt C."/>
            <person name="Mattick J.S."/>
            <person name="Hume D.A."/>
            <person name="Kai C."/>
            <person name="Sasaki D."/>
            <person name="Tomaru Y."/>
            <person name="Fukuda S."/>
            <person name="Kanamori-Katayama M."/>
            <person name="Suzuki M."/>
            <person name="Aoki J."/>
            <person name="Arakawa T."/>
            <person name="Iida J."/>
            <person name="Imamura K."/>
            <person name="Itoh M."/>
            <person name="Kato T."/>
            <person name="Kawaji H."/>
            <person name="Kawagashira N."/>
            <person name="Kawashima T."/>
            <person name="Kojima M."/>
            <person name="Kondo S."/>
            <person name="Konno H."/>
            <person name="Nakano K."/>
            <person name="Ninomiya N."/>
            <person name="Nishio T."/>
            <person name="Okada M."/>
            <person name="Plessy C."/>
            <person name="Shibata K."/>
            <person name="Shiraki T."/>
            <person name="Suzuki S."/>
            <person name="Tagami M."/>
            <person name="Waki K."/>
            <person name="Watahiki A."/>
            <person name="Okamura-Oho Y."/>
            <person name="Suzuki H."/>
            <person name="Kawai J."/>
            <person name="Hayashizaki Y."/>
        </authorList>
    </citation>
    <scope>NUCLEOTIDE SEQUENCE [LARGE SCALE MRNA] (ISOFORMS 1 AND 2)</scope>
    <source>
        <strain>C57BL/6J</strain>
        <tissue>Testis</tissue>
    </source>
</reference>
<reference key="2">
    <citation type="journal article" date="2004" name="Genome Res.">
        <title>The status, quality, and expansion of the NIH full-length cDNA project: the Mammalian Gene Collection (MGC).</title>
        <authorList>
            <consortium name="The MGC Project Team"/>
        </authorList>
    </citation>
    <scope>NUCLEOTIDE SEQUENCE [LARGE SCALE MRNA] (ISOFORM 1)</scope>
    <source>
        <tissue>Mammary gland</tissue>
    </source>
</reference>
<reference key="3">
    <citation type="journal article" date="2003" name="DNA Res.">
        <title>Prediction of the coding sequences of mouse homologues of KIAA gene: II. The complete nucleotide sequences of 400 mouse KIAA-homologous cDNAs identified by screening of terminal sequences of cDNA clones randomly sampled from size-fractionated libraries.</title>
        <authorList>
            <person name="Okazaki N."/>
            <person name="Kikuno R."/>
            <person name="Ohara R."/>
            <person name="Inamoto S."/>
            <person name="Aizawa H."/>
            <person name="Yuasa S."/>
            <person name="Nakajima D."/>
            <person name="Nagase T."/>
            <person name="Ohara O."/>
            <person name="Koga H."/>
        </authorList>
    </citation>
    <scope>NUCLEOTIDE SEQUENCE [LARGE SCALE MRNA] OF 60-409 (ISOFORM 1)</scope>
    <source>
        <tissue>Brain</tissue>
    </source>
</reference>
<reference key="4">
    <citation type="journal article" date="2010" name="Cell">
        <title>A tissue-specific atlas of mouse protein phosphorylation and expression.</title>
        <authorList>
            <person name="Huttlin E.L."/>
            <person name="Jedrychowski M.P."/>
            <person name="Elias J.E."/>
            <person name="Goswami T."/>
            <person name="Rad R."/>
            <person name="Beausoleil S.A."/>
            <person name="Villen J."/>
            <person name="Haas W."/>
            <person name="Sowa M.E."/>
            <person name="Gygi S.P."/>
        </authorList>
    </citation>
    <scope>PHOSPHORYLATION [LARGE SCALE ANALYSIS] AT SER-298; SER-303 AND SER-306</scope>
    <scope>IDENTIFICATION BY MASS SPECTROMETRY [LARGE SCALE ANALYSIS]</scope>
    <source>
        <tissue>Brain</tissue>
        <tissue>Kidney</tissue>
        <tissue>Testis</tissue>
    </source>
</reference>
<dbReference type="EMBL" id="AK016959">
    <property type="protein sequence ID" value="BAB30523.1"/>
    <property type="molecule type" value="mRNA"/>
</dbReference>
<dbReference type="EMBL" id="AK089654">
    <property type="protein sequence ID" value="BAC40939.1"/>
    <property type="molecule type" value="mRNA"/>
</dbReference>
<dbReference type="EMBL" id="BC095950">
    <property type="protein sequence ID" value="AAH95950.1"/>
    <property type="molecule type" value="mRNA"/>
</dbReference>
<dbReference type="EMBL" id="AK122332">
    <property type="protein sequence ID" value="BAC65614.1"/>
    <property type="molecule type" value="mRNA"/>
</dbReference>
<dbReference type="CCDS" id="CCDS22321.1">
    <molecule id="Q9D3X9-1"/>
</dbReference>
<dbReference type="CCDS" id="CCDS80877.1">
    <molecule id="Q9D3X9-2"/>
</dbReference>
<dbReference type="RefSeq" id="NP_001171352.1">
    <molecule id="Q9D3X9-1"/>
    <property type="nucleotide sequence ID" value="NM_001177881.1"/>
</dbReference>
<dbReference type="RefSeq" id="NP_001171353.1">
    <molecule id="Q9D3X9-1"/>
    <property type="nucleotide sequence ID" value="NM_001177882.1"/>
</dbReference>
<dbReference type="RefSeq" id="NP_001280698.1">
    <molecule id="Q9D3X9-2"/>
    <property type="nucleotide sequence ID" value="NM_001293769.1"/>
</dbReference>
<dbReference type="RefSeq" id="NP_082032.1">
    <molecule id="Q9D3X9-1"/>
    <property type="nucleotide sequence ID" value="NM_027756.5"/>
</dbReference>
<dbReference type="FunCoup" id="Q9D3X9">
    <property type="interactions" value="2028"/>
</dbReference>
<dbReference type="IntAct" id="Q9D3X9">
    <property type="interactions" value="1"/>
</dbReference>
<dbReference type="STRING" id="10090.ENSMUSP00000125139"/>
<dbReference type="GlyCosmos" id="Q9D3X9">
    <property type="glycosylation" value="5 sites, No reported glycans"/>
</dbReference>
<dbReference type="GlyGen" id="Q9D3X9">
    <property type="glycosylation" value="5 sites, 4 N-linked glycans (5 sites)"/>
</dbReference>
<dbReference type="iPTMnet" id="Q9D3X9"/>
<dbReference type="PhosphoSitePlus" id="Q9D3X9"/>
<dbReference type="SwissPalm" id="Q9D3X9"/>
<dbReference type="PaxDb" id="10090-ENSMUSP00000125139"/>
<dbReference type="PeptideAtlas" id="Q9D3X9"/>
<dbReference type="ProteomicsDB" id="295558">
    <molecule id="Q9D3X9-1"/>
</dbReference>
<dbReference type="ProteomicsDB" id="295559">
    <molecule id="Q9D3X9-2"/>
</dbReference>
<dbReference type="Antibodypedia" id="17138">
    <property type="antibodies" value="97 antibodies from 20 providers"/>
</dbReference>
<dbReference type="DNASU" id="71306"/>
<dbReference type="Ensembl" id="ENSMUST00000034066.4">
    <molecule id="Q9D3X9-1"/>
    <property type="protein sequence ID" value="ENSMUSP00000034066.4"/>
    <property type="gene ID" value="ENSMUSG00000031647.11"/>
</dbReference>
<dbReference type="Ensembl" id="ENSMUST00000160719.8">
    <molecule id="Q9D3X9-1"/>
    <property type="protein sequence ID" value="ENSMUSP00000125139.2"/>
    <property type="gene ID" value="ENSMUSG00000031647.11"/>
</dbReference>
<dbReference type="Ensembl" id="ENSMUST00000161421.2">
    <molecule id="Q9D3X9-2"/>
    <property type="protein sequence ID" value="ENSMUSP00000124136.2"/>
    <property type="gene ID" value="ENSMUSG00000031647.11"/>
</dbReference>
<dbReference type="Ensembl" id="ENSMUST00000161702.8">
    <molecule id="Q9D3X9-1"/>
    <property type="protein sequence ID" value="ENSMUSP00000124330.2"/>
    <property type="gene ID" value="ENSMUSG00000031647.11"/>
</dbReference>
<dbReference type="GeneID" id="71306"/>
<dbReference type="KEGG" id="mmu:71306"/>
<dbReference type="UCSC" id="uc009ltf.3">
    <molecule id="Q9D3X9-1"/>
    <property type="organism name" value="mouse"/>
</dbReference>
<dbReference type="AGR" id="MGI:1918556"/>
<dbReference type="CTD" id="9848"/>
<dbReference type="MGI" id="MGI:1918556">
    <property type="gene designation" value="Mfap3l"/>
</dbReference>
<dbReference type="VEuPathDB" id="HostDB:ENSMUSG00000031647"/>
<dbReference type="eggNOG" id="ENOG502QW9J">
    <property type="taxonomic scope" value="Eukaryota"/>
</dbReference>
<dbReference type="GeneTree" id="ENSGT00390000011576"/>
<dbReference type="HOGENOM" id="CLU_056017_2_0_1"/>
<dbReference type="InParanoid" id="Q9D3X9"/>
<dbReference type="OMA" id="CVLIDCN"/>
<dbReference type="OrthoDB" id="8611351at2759"/>
<dbReference type="PhylomeDB" id="Q9D3X9"/>
<dbReference type="TreeFam" id="TF333205"/>
<dbReference type="BioGRID-ORCS" id="71306">
    <property type="hits" value="2 hits in 77 CRISPR screens"/>
</dbReference>
<dbReference type="ChiTaRS" id="Mfap3l">
    <property type="organism name" value="mouse"/>
</dbReference>
<dbReference type="PRO" id="PR:Q9D3X9"/>
<dbReference type="Proteomes" id="UP000000589">
    <property type="component" value="Chromosome 8"/>
</dbReference>
<dbReference type="RNAct" id="Q9D3X9">
    <property type="molecule type" value="protein"/>
</dbReference>
<dbReference type="Bgee" id="ENSMUSG00000031647">
    <property type="expression patterns" value="Expressed in lacrimal gland and 217 other cell types or tissues"/>
</dbReference>
<dbReference type="GO" id="GO:0030054">
    <property type="term" value="C:cell junction"/>
    <property type="evidence" value="ECO:0007669"/>
    <property type="project" value="Ensembl"/>
</dbReference>
<dbReference type="GO" id="GO:0005737">
    <property type="term" value="C:cytoplasm"/>
    <property type="evidence" value="ECO:0000250"/>
    <property type="project" value="UniProtKB"/>
</dbReference>
<dbReference type="GO" id="GO:0005654">
    <property type="term" value="C:nucleoplasm"/>
    <property type="evidence" value="ECO:0007669"/>
    <property type="project" value="Ensembl"/>
</dbReference>
<dbReference type="GO" id="GO:0005634">
    <property type="term" value="C:nucleus"/>
    <property type="evidence" value="ECO:0000250"/>
    <property type="project" value="UniProtKB"/>
</dbReference>
<dbReference type="GO" id="GO:0005886">
    <property type="term" value="C:plasma membrane"/>
    <property type="evidence" value="ECO:0000250"/>
    <property type="project" value="UniProtKB"/>
</dbReference>
<dbReference type="FunFam" id="2.60.40.10:FF:001040">
    <property type="entry name" value="Microfibrillar-associated protein 3-like protein"/>
    <property type="match status" value="1"/>
</dbReference>
<dbReference type="Gene3D" id="2.60.40.10">
    <property type="entry name" value="Immunoglobulins"/>
    <property type="match status" value="1"/>
</dbReference>
<dbReference type="InterPro" id="IPR007110">
    <property type="entry name" value="Ig-like_dom"/>
</dbReference>
<dbReference type="InterPro" id="IPR036179">
    <property type="entry name" value="Ig-like_dom_sf"/>
</dbReference>
<dbReference type="InterPro" id="IPR013783">
    <property type="entry name" value="Ig-like_fold"/>
</dbReference>
<dbReference type="InterPro" id="IPR013098">
    <property type="entry name" value="Ig_I-set"/>
</dbReference>
<dbReference type="InterPro" id="IPR003599">
    <property type="entry name" value="Ig_sub"/>
</dbReference>
<dbReference type="InterPro" id="IPR003598">
    <property type="entry name" value="Ig_sub2"/>
</dbReference>
<dbReference type="PANTHER" id="PTHR14340">
    <property type="entry name" value="MICROFIBRIL-ASSOCIATED GLYCOPROTEIN 3"/>
    <property type="match status" value="1"/>
</dbReference>
<dbReference type="PANTHER" id="PTHR14340:SF2">
    <property type="entry name" value="MICROFIBRILLAR-ASSOCIATED PROTEIN 3-LIKE"/>
    <property type="match status" value="1"/>
</dbReference>
<dbReference type="Pfam" id="PF07679">
    <property type="entry name" value="I-set"/>
    <property type="match status" value="1"/>
</dbReference>
<dbReference type="SMART" id="SM00409">
    <property type="entry name" value="IG"/>
    <property type="match status" value="1"/>
</dbReference>
<dbReference type="SMART" id="SM00408">
    <property type="entry name" value="IGc2"/>
    <property type="match status" value="1"/>
</dbReference>
<dbReference type="SUPFAM" id="SSF48726">
    <property type="entry name" value="Immunoglobulin"/>
    <property type="match status" value="1"/>
</dbReference>
<dbReference type="PROSITE" id="PS50835">
    <property type="entry name" value="IG_LIKE"/>
    <property type="match status" value="1"/>
</dbReference>
<organism>
    <name type="scientific">Mus musculus</name>
    <name type="common">Mouse</name>
    <dbReference type="NCBI Taxonomy" id="10090"/>
    <lineage>
        <taxon>Eukaryota</taxon>
        <taxon>Metazoa</taxon>
        <taxon>Chordata</taxon>
        <taxon>Craniata</taxon>
        <taxon>Vertebrata</taxon>
        <taxon>Euteleostomi</taxon>
        <taxon>Mammalia</taxon>
        <taxon>Eutheria</taxon>
        <taxon>Euarchontoglires</taxon>
        <taxon>Glires</taxon>
        <taxon>Rodentia</taxon>
        <taxon>Myomorpha</taxon>
        <taxon>Muroidea</taxon>
        <taxon>Muridae</taxon>
        <taxon>Murinae</taxon>
        <taxon>Mus</taxon>
        <taxon>Mus</taxon>
    </lineage>
</organism>
<feature type="signal peptide" evidence="3">
    <location>
        <begin position="1"/>
        <end position="28"/>
    </location>
</feature>
<feature type="chain" id="PRO_0000014870" description="Microfibrillar-associated protein 3-like">
    <location>
        <begin position="29"/>
        <end position="409"/>
    </location>
</feature>
<feature type="topological domain" description="Extracellular" evidence="3">
    <location>
        <begin position="29"/>
        <end position="148"/>
    </location>
</feature>
<feature type="transmembrane region" description="Helical" evidence="3">
    <location>
        <begin position="149"/>
        <end position="169"/>
    </location>
</feature>
<feature type="topological domain" description="Cytoplasmic" evidence="3">
    <location>
        <begin position="170"/>
        <end position="409"/>
    </location>
</feature>
<feature type="domain" description="Ig-like C2-type" evidence="4">
    <location>
        <begin position="47"/>
        <end position="141"/>
    </location>
</feature>
<feature type="region of interest" description="Disordered" evidence="5">
    <location>
        <begin position="319"/>
        <end position="395"/>
    </location>
</feature>
<feature type="compositionally biased region" description="Basic and acidic residues" evidence="5">
    <location>
        <begin position="325"/>
        <end position="340"/>
    </location>
</feature>
<feature type="compositionally biased region" description="Low complexity" evidence="5">
    <location>
        <begin position="356"/>
        <end position="373"/>
    </location>
</feature>
<feature type="modified residue" description="Phosphotyrosine" evidence="1">
    <location>
        <position position="287"/>
    </location>
</feature>
<feature type="modified residue" description="Phosphoserine" evidence="8">
    <location>
        <position position="298"/>
    </location>
</feature>
<feature type="modified residue" description="Phosphoserine" evidence="8">
    <location>
        <position position="303"/>
    </location>
</feature>
<feature type="modified residue" description="Phosphoserine" evidence="8">
    <location>
        <position position="306"/>
    </location>
</feature>
<feature type="modified residue" description="Phosphoserine" evidence="2">
    <location>
        <position position="307"/>
    </location>
</feature>
<feature type="glycosylation site" description="N-linked (GlcNAc...) asparagine" evidence="3">
    <location>
        <position position="33"/>
    </location>
</feature>
<feature type="glycosylation site" description="N-linked (GlcNAc...) asparagine" evidence="3">
    <location>
        <position position="37"/>
    </location>
</feature>
<feature type="glycosylation site" description="N-linked (GlcNAc...) asparagine" evidence="3">
    <location>
        <position position="67"/>
    </location>
</feature>
<feature type="glycosylation site" description="N-linked (GlcNAc...) asparagine" evidence="3">
    <location>
        <position position="111"/>
    </location>
</feature>
<feature type="glycosylation site" description="N-linked (GlcNAc...) asparagine" evidence="3">
    <location>
        <position position="135"/>
    </location>
</feature>
<feature type="disulfide bond" evidence="4">
    <location>
        <begin position="68"/>
        <end position="125"/>
    </location>
</feature>
<feature type="splice variant" id="VSP_014096" description="In isoform 2." evidence="6">
    <location>
        <begin position="1"/>
        <end position="103"/>
    </location>
</feature>
<feature type="sequence conflict" description="In Ref. 1; BAC40939." evidence="7" ref="1">
    <original>R</original>
    <variation>G</variation>
    <location>
        <position position="283"/>
    </location>
</feature>